<organism>
    <name type="scientific">Hepatitis E virus genotype 3 (isolate Human/United States/US2)</name>
    <name type="common">HEV-3</name>
    <dbReference type="NCBI Taxonomy" id="509615"/>
    <lineage>
        <taxon>Viruses</taxon>
        <taxon>Riboviria</taxon>
        <taxon>Orthornavirae</taxon>
        <taxon>Kitrinoviricota</taxon>
        <taxon>Alsuviricetes</taxon>
        <taxon>Hepelivirales</taxon>
        <taxon>Hepeviridae</taxon>
        <taxon>Orthohepevirinae</taxon>
        <taxon>Paslahepevirus</taxon>
        <taxon>Hepatitis E virus</taxon>
    </lineage>
</organism>
<feature type="chain" id="PRO_0000334540" description="Protein ORF3">
    <location>
        <begin position="1"/>
        <end position="113"/>
    </location>
</feature>
<feature type="region of interest" description="Hydrophobic">
    <location>
        <begin position="1"/>
        <end position="21"/>
    </location>
</feature>
<feature type="region of interest" description="Interaction with host HPX" evidence="1">
    <location>
        <begin position="27"/>
        <end position="67"/>
    </location>
</feature>
<feature type="region of interest" description="Hydrophobic">
    <location>
        <begin position="32"/>
        <end position="52"/>
    </location>
</feature>
<feature type="region of interest" description="Interaction with the capsid protein" evidence="1">
    <location>
        <begin position="47"/>
        <end position="71"/>
    </location>
</feature>
<feature type="region of interest" description="Homodimerization, and interaction with host AMBP/bikunin" evidence="1">
    <location>
        <begin position="71"/>
        <end position="113"/>
    </location>
</feature>
<feature type="region of interest" description="Disordered" evidence="3">
    <location>
        <begin position="90"/>
        <end position="113"/>
    </location>
</feature>
<feature type="region of interest" description="Interaction with host SRC, HCK, FYN, PIK3R3 and GRB2" evidence="1">
    <location>
        <begin position="94"/>
        <end position="103"/>
    </location>
</feature>
<feature type="short sequence motif" description="PTAP/PSAP motif" evidence="2">
    <location>
        <begin position="95"/>
        <end position="98"/>
    </location>
</feature>
<feature type="modified residue" description="Phosphoserine; by host" evidence="1">
    <location>
        <position position="70"/>
    </location>
</feature>
<organismHost>
    <name type="scientific">Bandicota bengalensis</name>
    <name type="common">lesser bandicoot rat</name>
    <dbReference type="NCBI Taxonomy" id="69079"/>
</organismHost>
<organismHost>
    <name type="scientific">Callithrix</name>
    <dbReference type="NCBI Taxonomy" id="9481"/>
</organismHost>
<organismHost>
    <name type="scientific">Cercopithecus hamlyni</name>
    <name type="common">Owl-faced monkey</name>
    <name type="synonym">Hamlyn's monkey</name>
    <dbReference type="NCBI Taxonomy" id="9536"/>
</organismHost>
<organismHost>
    <name type="scientific">Chlorocebus aethiops</name>
    <name type="common">Green monkey</name>
    <name type="synonym">Cercopithecus aethiops</name>
    <dbReference type="NCBI Taxonomy" id="9534"/>
</organismHost>
<organismHost>
    <name type="scientific">Homo sapiens</name>
    <name type="common">Human</name>
    <dbReference type="NCBI Taxonomy" id="9606"/>
</organismHost>
<organismHost>
    <name type="scientific">Macaca</name>
    <name type="common">macaques</name>
    <dbReference type="NCBI Taxonomy" id="9539"/>
</organismHost>
<organismHost>
    <name type="scientific">Mus musculus</name>
    <name type="common">Mouse</name>
    <dbReference type="NCBI Taxonomy" id="10090"/>
</organismHost>
<organismHost>
    <name type="scientific">Pan troglodytes</name>
    <name type="common">Chimpanzee</name>
    <dbReference type="NCBI Taxonomy" id="9598"/>
</organismHost>
<organismHost>
    <name type="scientific">Saimiri</name>
    <name type="common">squirrel monkeys</name>
    <dbReference type="NCBI Taxonomy" id="9520"/>
</organismHost>
<organismHost>
    <name type="scientific">Sus scrofa</name>
    <name type="common">Pig</name>
    <dbReference type="NCBI Taxonomy" id="9823"/>
</organismHost>
<keyword id="KW-0002">3D-structure</keyword>
<keyword id="KW-1032">Host cell membrane</keyword>
<keyword id="KW-1035">Host cytoplasm</keyword>
<keyword id="KW-1037">Host cytoskeleton</keyword>
<keyword id="KW-1038">Host endoplasmic reticulum</keyword>
<keyword id="KW-1043">Host membrane</keyword>
<keyword id="KW-0945">Host-virus interaction</keyword>
<keyword id="KW-0449">Lipoprotein</keyword>
<keyword id="KW-0472">Membrane</keyword>
<keyword id="KW-0597">Phosphoprotein</keyword>
<keyword id="KW-0946">Virion</keyword>
<reference key="1">
    <citation type="journal article" date="1999" name="J. Gen. Virol.">
        <title>A hepatitis E virus variant from the United States: molecular characterization and transmission in cynomolgus macaques.</title>
        <authorList>
            <person name="Erker J.C."/>
            <person name="Desai S.M."/>
            <person name="Schlauder G.G."/>
            <person name="Dawson G.J."/>
            <person name="Mushahwar I.K."/>
        </authorList>
    </citation>
    <scope>NUCLEOTIDE SEQUENCE [GENOMIC DNA]</scope>
</reference>
<accession>Q9YLR0</accession>
<protein>
    <recommendedName>
        <fullName>Protein ORF3</fullName>
        <shortName>pORF3</shortName>
    </recommendedName>
</protein>
<proteinExistence type="evidence at protein level"/>
<name>ORF3_HEVUS</name>
<sequence length="113" mass="11446">MGSPCALGLFCCCSSCFCLCCPRHRPASRLAAVVGGAAAVPAVVSGVTGLILSPSPSPIFIQPTPSPPMSFHNPGLELALDSRPAPLXPLGVTSPSAPPLPPVVDLPQLGLRR</sequence>
<comment type="function">
    <text evidence="2">Small multifunctional phosphoprotein involved in virion morphogenesis, egress and counteracting host innate immunity. Plays critical roles in the final steps of viral release by interacting with host TSG101, a member of the vacuolar protein-sorting pathway and using other cellular host proteins involved in vesicle formation pathway. Also acts as a viroporin and forms ion conductive pores allowing viral particle release. Impairs the generation of type I interferon by down-regulating host TLR3 and TLR7 as well as their downstream signaling pathways. Down-regulates the phosphorylation of host IRF3 via the interaction with host SIRP-alpha, thereby inhibiting IFN-I expression. Interacts with host microtubules.</text>
</comment>
<comment type="subunit">
    <text evidence="2">Forms homooligomers (By similarity). Interacts with host SRC, HCK, FYN, PIK3R3 and GRB2 (via SH3 domain); binding does not activate the kinases (By similarity). Interacts with host AMBP/bikunin and AMBP/alpha-1-microglobulin peptides (By similarity). Interacts with host HPX/hemopexin. Interacts (when phosphorylated) with capsid protein ORF2 (By similarity). Interacts with host TSG101; this interaction plays a role in viral release from the host cell (By similarity). Interacts with host SIRPA; this interaction down-regulates the phosphorylation of host IRF3 (By similarity).</text>
</comment>
<comment type="subcellular location">
    <subcellularLocation>
        <location evidence="2">Host endoplasmic reticulum membrane</location>
        <topology evidence="2">Lipid-anchor</topology>
    </subcellularLocation>
    <subcellularLocation>
        <location evidence="2">Host cytoplasm</location>
        <location evidence="2">Host cytoskeleton</location>
    </subcellularLocation>
    <subcellularLocation>
        <location evidence="2">Virion</location>
    </subcellularLocation>
    <subcellularLocation>
        <location evidence="2">Host cell membrane</location>
        <topology evidence="2">Lipid-anchor</topology>
    </subcellularLocation>
    <text evidence="2">The N-terminal region seems to associate with the cytoskeleton probably via one of its hydrophobic regions. Present on the surface of the membrane-wrapped virions.</text>
</comment>
<comment type="domain">
    <text evidence="2">The PSAP motif is necessary for the release of membrane-wrapped virions from infected cells.</text>
</comment>
<comment type="PTM">
    <text evidence="2">Palmitoylated in the N-terminus.</text>
</comment>
<comment type="miscellaneous">
    <text evidence="2">The viral particles present in feces and bile are non-enveloped, while those in circulating blood and culture supernatants are covered with a cellular membrane (quasi-enveloped).</text>
</comment>
<comment type="similarity">
    <text evidence="4">Belongs to the hepevirus ORF3 protein family.</text>
</comment>
<comment type="sequence caution" evidence="4">
    <conflict type="erroneous initiation">
        <sequence resource="EMBL-CDS" id="AAD15817"/>
    </conflict>
</comment>
<dbReference type="EMBL" id="AF060669">
    <property type="protein sequence ID" value="AAD15817.1"/>
    <property type="status" value="ALT_INIT"/>
    <property type="molecule type" value="Genomic_DNA"/>
</dbReference>
<dbReference type="PDB" id="7NLC">
    <property type="method" value="X-ray"/>
    <property type="resolution" value="1.40 A"/>
    <property type="chains" value="B=93-102"/>
</dbReference>
<dbReference type="PDBsum" id="7NLC"/>
<dbReference type="SMR" id="Q9YLR0"/>
<dbReference type="SwissPalm" id="Q9YLR0"/>
<dbReference type="Proteomes" id="UP000007247">
    <property type="component" value="Genome"/>
</dbReference>
<dbReference type="GO" id="GO:0044167">
    <property type="term" value="C:host cell endoplasmic reticulum membrane"/>
    <property type="evidence" value="ECO:0007669"/>
    <property type="project" value="UniProtKB-SubCell"/>
</dbReference>
<dbReference type="GO" id="GO:0020002">
    <property type="term" value="C:host cell plasma membrane"/>
    <property type="evidence" value="ECO:0007669"/>
    <property type="project" value="UniProtKB-SubCell"/>
</dbReference>
<dbReference type="GO" id="GO:0044163">
    <property type="term" value="C:host cytoskeleton"/>
    <property type="evidence" value="ECO:0007669"/>
    <property type="project" value="UniProtKB-SubCell"/>
</dbReference>
<dbReference type="GO" id="GO:0016020">
    <property type="term" value="C:membrane"/>
    <property type="evidence" value="ECO:0007669"/>
    <property type="project" value="UniProtKB-KW"/>
</dbReference>
<dbReference type="GO" id="GO:0044423">
    <property type="term" value="C:virion component"/>
    <property type="evidence" value="ECO:0007669"/>
    <property type="project" value="UniProtKB-KW"/>
</dbReference>
<dbReference type="InterPro" id="IPR003384">
    <property type="entry name" value="HEV_Orf2"/>
</dbReference>
<dbReference type="Pfam" id="PF02444">
    <property type="entry name" value="HEV_ORF1"/>
    <property type="match status" value="1"/>
</dbReference>
<gene>
    <name type="ORF">ORF3</name>
</gene>
<evidence type="ECO:0000250" key="1"/>
<evidence type="ECO:0000250" key="2">
    <source>
        <dbReference type="UniProtKB" id="Q81870"/>
    </source>
</evidence>
<evidence type="ECO:0000256" key="3">
    <source>
        <dbReference type="SAM" id="MobiDB-lite"/>
    </source>
</evidence>
<evidence type="ECO:0000305" key="4"/>